<keyword id="KW-0028">Amino-acid biosynthesis</keyword>
<keyword id="KW-0963">Cytoplasm</keyword>
<keyword id="KW-0368">Histidine biosynthesis</keyword>
<keyword id="KW-0413">Isomerase</keyword>
<evidence type="ECO:0000255" key="1">
    <source>
        <dbReference type="HAMAP-Rule" id="MF_01014"/>
    </source>
</evidence>
<gene>
    <name evidence="1" type="primary">hisA</name>
    <name type="ordered locus">XC_2376</name>
</gene>
<proteinExistence type="inferred from homology"/>
<accession>Q4UU44</accession>
<comment type="catalytic activity">
    <reaction evidence="1">
        <text>1-(5-phospho-beta-D-ribosyl)-5-[(5-phospho-beta-D-ribosylamino)methylideneamino]imidazole-4-carboxamide = 5-[(5-phospho-1-deoxy-D-ribulos-1-ylimino)methylamino]-1-(5-phospho-beta-D-ribosyl)imidazole-4-carboxamide</text>
        <dbReference type="Rhea" id="RHEA:15469"/>
        <dbReference type="ChEBI" id="CHEBI:58435"/>
        <dbReference type="ChEBI" id="CHEBI:58525"/>
        <dbReference type="EC" id="5.3.1.16"/>
    </reaction>
</comment>
<comment type="pathway">
    <text evidence="1">Amino-acid biosynthesis; L-histidine biosynthesis; L-histidine from 5-phospho-alpha-D-ribose 1-diphosphate: step 4/9.</text>
</comment>
<comment type="subcellular location">
    <subcellularLocation>
        <location evidence="1">Cytoplasm</location>
    </subcellularLocation>
</comment>
<comment type="similarity">
    <text evidence="1">Belongs to the HisA/HisF family.</text>
</comment>
<dbReference type="EC" id="5.3.1.16" evidence="1"/>
<dbReference type="EMBL" id="CP000050">
    <property type="protein sequence ID" value="AAY49429.1"/>
    <property type="molecule type" value="Genomic_DNA"/>
</dbReference>
<dbReference type="RefSeq" id="WP_011036983.1">
    <property type="nucleotide sequence ID" value="NZ_CP155948.1"/>
</dbReference>
<dbReference type="SMR" id="Q4UU44"/>
<dbReference type="KEGG" id="xcb:XC_2376"/>
<dbReference type="HOGENOM" id="CLU_048577_1_2_6"/>
<dbReference type="UniPathway" id="UPA00031">
    <property type="reaction ID" value="UER00009"/>
</dbReference>
<dbReference type="Proteomes" id="UP000000420">
    <property type="component" value="Chromosome"/>
</dbReference>
<dbReference type="GO" id="GO:0005737">
    <property type="term" value="C:cytoplasm"/>
    <property type="evidence" value="ECO:0007669"/>
    <property type="project" value="UniProtKB-SubCell"/>
</dbReference>
<dbReference type="GO" id="GO:0003949">
    <property type="term" value="F:1-(5-phosphoribosyl)-5-[(5-phosphoribosylamino)methylideneamino]imidazole-4-carboxamide isomerase activity"/>
    <property type="evidence" value="ECO:0007669"/>
    <property type="project" value="UniProtKB-UniRule"/>
</dbReference>
<dbReference type="GO" id="GO:0000105">
    <property type="term" value="P:L-histidine biosynthetic process"/>
    <property type="evidence" value="ECO:0007669"/>
    <property type="project" value="UniProtKB-UniRule"/>
</dbReference>
<dbReference type="GO" id="GO:0000162">
    <property type="term" value="P:L-tryptophan biosynthetic process"/>
    <property type="evidence" value="ECO:0007669"/>
    <property type="project" value="TreeGrafter"/>
</dbReference>
<dbReference type="CDD" id="cd04732">
    <property type="entry name" value="HisA"/>
    <property type="match status" value="1"/>
</dbReference>
<dbReference type="FunFam" id="3.20.20.70:FF:000009">
    <property type="entry name" value="1-(5-phosphoribosyl)-5-[(5-phosphoribosylamino)methylideneamino] imidazole-4-carboxamide isomerase"/>
    <property type="match status" value="1"/>
</dbReference>
<dbReference type="Gene3D" id="3.20.20.70">
    <property type="entry name" value="Aldolase class I"/>
    <property type="match status" value="1"/>
</dbReference>
<dbReference type="HAMAP" id="MF_01014">
    <property type="entry name" value="HisA"/>
    <property type="match status" value="1"/>
</dbReference>
<dbReference type="InterPro" id="IPR013785">
    <property type="entry name" value="Aldolase_TIM"/>
</dbReference>
<dbReference type="InterPro" id="IPR006062">
    <property type="entry name" value="His_biosynth"/>
</dbReference>
<dbReference type="InterPro" id="IPR006063">
    <property type="entry name" value="HisA_bact_arch"/>
</dbReference>
<dbReference type="InterPro" id="IPR044524">
    <property type="entry name" value="Isoase_HisA-like"/>
</dbReference>
<dbReference type="InterPro" id="IPR023016">
    <property type="entry name" value="Isoase_HisA-like_bact"/>
</dbReference>
<dbReference type="InterPro" id="IPR011060">
    <property type="entry name" value="RibuloseP-bd_barrel"/>
</dbReference>
<dbReference type="NCBIfam" id="TIGR00007">
    <property type="entry name" value="1-(5-phosphoribosyl)-5-[(5-phosphoribosylamino)methylideneamino]imidazole-4-carboxamide isomerase"/>
    <property type="match status" value="1"/>
</dbReference>
<dbReference type="PANTHER" id="PTHR43090">
    <property type="entry name" value="1-(5-PHOSPHORIBOSYL)-5-[(5-PHOSPHORIBOSYLAMINO)METHYLIDENEAMINO] IMIDAZOLE-4-CARBOXAMIDE ISOMERASE"/>
    <property type="match status" value="1"/>
</dbReference>
<dbReference type="PANTHER" id="PTHR43090:SF2">
    <property type="entry name" value="1-(5-PHOSPHORIBOSYL)-5-[(5-PHOSPHORIBOSYLAMINO)METHYLIDENEAMINO] IMIDAZOLE-4-CARBOXAMIDE ISOMERASE"/>
    <property type="match status" value="1"/>
</dbReference>
<dbReference type="Pfam" id="PF00977">
    <property type="entry name" value="His_biosynth"/>
    <property type="match status" value="1"/>
</dbReference>
<dbReference type="SUPFAM" id="SSF51366">
    <property type="entry name" value="Ribulose-phoshate binding barrel"/>
    <property type="match status" value="1"/>
</dbReference>
<reference key="1">
    <citation type="journal article" date="2005" name="Genome Res.">
        <title>Comparative and functional genomic analyses of the pathogenicity of phytopathogen Xanthomonas campestris pv. campestris.</title>
        <authorList>
            <person name="Qian W."/>
            <person name="Jia Y."/>
            <person name="Ren S.-X."/>
            <person name="He Y.-Q."/>
            <person name="Feng J.-X."/>
            <person name="Lu L.-F."/>
            <person name="Sun Q."/>
            <person name="Ying G."/>
            <person name="Tang D.-J."/>
            <person name="Tang H."/>
            <person name="Wu W."/>
            <person name="Hao P."/>
            <person name="Wang L."/>
            <person name="Jiang B.-L."/>
            <person name="Zeng S."/>
            <person name="Gu W.-Y."/>
            <person name="Lu G."/>
            <person name="Rong L."/>
            <person name="Tian Y."/>
            <person name="Yao Z."/>
            <person name="Fu G."/>
            <person name="Chen B."/>
            <person name="Fang R."/>
            <person name="Qiang B."/>
            <person name="Chen Z."/>
            <person name="Zhao G.-P."/>
            <person name="Tang J.-L."/>
            <person name="He C."/>
        </authorList>
    </citation>
    <scope>NUCLEOTIDE SEQUENCE [LARGE SCALE GENOMIC DNA]</scope>
    <source>
        <strain>8004</strain>
    </source>
</reference>
<organism>
    <name type="scientific">Xanthomonas campestris pv. campestris (strain 8004)</name>
    <dbReference type="NCBI Taxonomy" id="314565"/>
    <lineage>
        <taxon>Bacteria</taxon>
        <taxon>Pseudomonadati</taxon>
        <taxon>Pseudomonadota</taxon>
        <taxon>Gammaproteobacteria</taxon>
        <taxon>Lysobacterales</taxon>
        <taxon>Lysobacteraceae</taxon>
        <taxon>Xanthomonas</taxon>
    </lineage>
</organism>
<sequence length="244" mass="25729">MSFTVYPALDIRDGRVVRLLQGDYARETRYGDDVLPRAQAFADAGAQWMHLVDLDAAKAGGYTLAALLGQISRQTGLQVQTGGGVRSREDVARILDAGAARVVVGSLAVRDSATVIGWLQEFGTDRLTIALDTRQDAAGVWQLPVHGWTETAEATLDQLATQYAQAGLQHLLCTDIARDGMLSGPNMGLYAHLRALAPQLQVQVSGGARNLADVAAAKAAGCAGIVLGKALLEGHLDLKDALAC</sequence>
<name>HIS4_XANC8</name>
<protein>
    <recommendedName>
        <fullName evidence="1">1-(5-phosphoribosyl)-5-[(5-phosphoribosylamino)methylideneamino] imidazole-4-carboxamide isomerase</fullName>
        <ecNumber evidence="1">5.3.1.16</ecNumber>
    </recommendedName>
    <alternativeName>
        <fullName evidence="1">Phosphoribosylformimino-5-aminoimidazole carboxamide ribotide isomerase</fullName>
    </alternativeName>
</protein>
<feature type="chain" id="PRO_0000229094" description="1-(5-phosphoribosyl)-5-[(5-phosphoribosylamino)methylideneamino] imidazole-4-carboxamide isomerase">
    <location>
        <begin position="1"/>
        <end position="244"/>
    </location>
</feature>
<feature type="active site" description="Proton acceptor" evidence="1">
    <location>
        <position position="10"/>
    </location>
</feature>
<feature type="active site" description="Proton donor" evidence="1">
    <location>
        <position position="132"/>
    </location>
</feature>